<reference evidence="5" key="1">
    <citation type="journal article" date="2017" name="Int. J. Biol. Macromol.">
        <title>Structural studies of a vasorelaxant lectin from Dioclea reflexa Hook seeds: Crystal structure, molecular docking and dynamics.</title>
        <authorList>
            <person name="Pinto-Junior V.R."/>
            <person name="Osterne V.J."/>
            <person name="Santiago M.Q."/>
            <person name="Correia J.L."/>
            <person name="Pereira-Junior F.N."/>
            <person name="Leal R.B."/>
            <person name="Pereira M.G."/>
            <person name="Chicas L.S."/>
            <person name="Nagano C.S."/>
            <person name="Rocha B.A."/>
            <person name="Silva-Filho J.C."/>
            <person name="Ferreira W.P."/>
            <person name="Rocha C.R."/>
            <person name="Nascimento K.S."/>
            <person name="Assreuy A.M."/>
            <person name="Cavada B.S."/>
        </authorList>
    </citation>
    <scope>PROTEIN SEQUENCE</scope>
    <scope>SUBUNIT</scope>
    <scope>IDENTIFICATION BY MASS SPECTROMETRY</scope>
    <scope>X-RAY CRYSTALLOGRAPHY (1.8 ANGSTROMS) OF 1-237 IN COMPLEX WITH CARBOHYDRATE; CALCIUM AND MANGANESE</scope>
    <source>
        <tissue evidence="4">Seed</tissue>
    </source>
</reference>
<reference evidence="5" key="2">
    <citation type="journal article" date="2016" name="J. Mol. Recognit.">
        <title>Purification and molecular characterization of a novel mannose-specific lectin from Dioclea reflexa hook seeds with inflammatory activity.</title>
        <authorList>
            <person name="Pinto-Junior V.R."/>
            <person name="Correia J.L."/>
            <person name="Pereira R.I."/>
            <person name="Pereira-Junior F.N."/>
            <person name="Santiago M.Q."/>
            <person name="Osterne V.J."/>
            <person name="Madeira J.C."/>
            <person name="Cajazeiras J.B."/>
            <person name="Nagano C.S."/>
            <person name="Delatorre P."/>
            <person name="Assreuy A.M."/>
            <person name="Nascimento K.S."/>
            <person name="Cavada B.S."/>
        </authorList>
    </citation>
    <scope>FUNCTION</scope>
    <scope>BIOPHYSICOCHEMICAL PROPERTIES</scope>
    <scope>MASS SPECTROMETRY</scope>
</reference>
<feature type="chain" id="PRO_0000439557" description="Lectin" evidence="2">
    <location>
        <begin position="1"/>
        <end position="237"/>
    </location>
</feature>
<feature type="binding site" evidence="2 7">
    <location>
        <position position="8"/>
    </location>
    <ligand>
        <name>Mn(2+)</name>
        <dbReference type="ChEBI" id="CHEBI:29035"/>
    </ligand>
</feature>
<feature type="binding site" evidence="2 7">
    <location>
        <position position="10"/>
    </location>
    <ligand>
        <name>Ca(2+)</name>
        <dbReference type="ChEBI" id="CHEBI:29108"/>
    </ligand>
</feature>
<feature type="binding site" evidence="2 7">
    <location>
        <position position="10"/>
    </location>
    <ligand>
        <name>Mn(2+)</name>
        <dbReference type="ChEBI" id="CHEBI:29035"/>
    </ligand>
</feature>
<feature type="binding site" evidence="2 7">
    <location>
        <position position="12"/>
    </location>
    <ligand>
        <name>a carbohydrate</name>
        <dbReference type="ChEBI" id="CHEBI:16646"/>
    </ligand>
</feature>
<feature type="binding site" evidence="2 7">
    <location>
        <position position="12"/>
    </location>
    <ligand>
        <name>Ca(2+)</name>
        <dbReference type="ChEBI" id="CHEBI:29108"/>
    </ligand>
</feature>
<feature type="binding site" evidence="2 7">
    <location>
        <position position="14"/>
    </location>
    <ligand>
        <name>a carbohydrate</name>
        <dbReference type="ChEBI" id="CHEBI:16646"/>
    </ligand>
</feature>
<feature type="binding site" evidence="2 7">
    <location>
        <position position="14"/>
    </location>
    <ligand>
        <name>Ca(2+)</name>
        <dbReference type="ChEBI" id="CHEBI:29108"/>
    </ligand>
</feature>
<feature type="binding site" evidence="2 7">
    <location>
        <position position="19"/>
    </location>
    <ligand>
        <name>Ca(2+)</name>
        <dbReference type="ChEBI" id="CHEBI:29108"/>
    </ligand>
</feature>
<feature type="binding site" evidence="2 7">
    <location>
        <position position="19"/>
    </location>
    <ligand>
        <name>Mn(2+)</name>
        <dbReference type="ChEBI" id="CHEBI:29035"/>
    </ligand>
</feature>
<feature type="binding site" evidence="2 7">
    <location>
        <position position="24"/>
    </location>
    <ligand>
        <name>Mn(2+)</name>
        <dbReference type="ChEBI" id="CHEBI:29035"/>
    </ligand>
</feature>
<feature type="binding site" evidence="2 7">
    <location>
        <begin position="98"/>
        <end position="100"/>
    </location>
    <ligand>
        <name>a carbohydrate</name>
        <dbReference type="ChEBI" id="CHEBI:16646"/>
    </ligand>
</feature>
<feature type="binding site" evidence="2 7">
    <location>
        <position position="208"/>
    </location>
    <ligand>
        <name>Ca(2+)</name>
        <dbReference type="ChEBI" id="CHEBI:29108"/>
    </ligand>
</feature>
<feature type="binding site" evidence="2 7">
    <location>
        <position position="227"/>
    </location>
    <ligand>
        <name>a carbohydrate</name>
        <dbReference type="ChEBI" id="CHEBI:16646"/>
    </ligand>
</feature>
<feature type="binding site" evidence="2 7">
    <location>
        <position position="228"/>
    </location>
    <ligand>
        <name>a carbohydrate</name>
        <dbReference type="ChEBI" id="CHEBI:16646"/>
    </ligand>
</feature>
<feature type="strand" evidence="8">
    <location>
        <begin position="4"/>
        <end position="10"/>
    </location>
</feature>
<feature type="helix" evidence="8">
    <location>
        <begin position="15"/>
        <end position="17"/>
    </location>
</feature>
<feature type="strand" evidence="8">
    <location>
        <begin position="24"/>
        <end position="33"/>
    </location>
</feature>
<feature type="strand" evidence="8">
    <location>
        <begin position="35"/>
        <end position="39"/>
    </location>
</feature>
<feature type="strand" evidence="8">
    <location>
        <begin position="46"/>
        <end position="55"/>
    </location>
</feature>
<feature type="turn" evidence="8">
    <location>
        <begin position="56"/>
        <end position="59"/>
    </location>
</feature>
<feature type="strand" evidence="8">
    <location>
        <begin position="60"/>
        <end position="67"/>
    </location>
</feature>
<feature type="strand" evidence="8">
    <location>
        <begin position="73"/>
        <end position="78"/>
    </location>
</feature>
<feature type="helix" evidence="8">
    <location>
        <begin position="81"/>
        <end position="83"/>
    </location>
</feature>
<feature type="strand" evidence="8">
    <location>
        <begin position="87"/>
        <end position="96"/>
    </location>
</feature>
<feature type="strand" evidence="8">
    <location>
        <begin position="105"/>
        <end position="116"/>
    </location>
</feature>
<feature type="strand" evidence="8">
    <location>
        <begin position="125"/>
        <end position="132"/>
    </location>
</feature>
<feature type="strand" evidence="8">
    <location>
        <begin position="140"/>
        <end position="144"/>
    </location>
</feature>
<feature type="strand" evidence="8">
    <location>
        <begin position="154"/>
        <end position="157"/>
    </location>
</feature>
<feature type="strand" evidence="8">
    <location>
        <begin position="170"/>
        <end position="177"/>
    </location>
</feature>
<feature type="strand" evidence="8">
    <location>
        <begin position="187"/>
        <end position="198"/>
    </location>
</feature>
<feature type="strand" evidence="8">
    <location>
        <begin position="202"/>
        <end position="205"/>
    </location>
</feature>
<feature type="strand" evidence="8">
    <location>
        <begin position="209"/>
        <end position="216"/>
    </location>
</feature>
<feature type="helix" evidence="8">
    <location>
        <begin position="227"/>
        <end position="229"/>
    </location>
</feature>
<feature type="turn" evidence="8">
    <location>
        <begin position="230"/>
        <end position="232"/>
    </location>
</feature>
<proteinExistence type="evidence at protein level"/>
<name>LECA_MACCS</name>
<comment type="function">
    <text evidence="1">D-mannose/D-glucose-binding lectin with hemagglutinating activity towards rabbit and human erythrocytes. In rats, induces dose-dependent paw edema. Has low cytotoxicity against Artemisia sp.</text>
</comment>
<comment type="biophysicochemical properties">
    <phDependence>
        <text evidence="1">Optimum pH for hemagglutinating activity is between pH 5 and pH 7. Activity quickly decreases outside this range.</text>
    </phDependence>
    <temperatureDependence>
        <text evidence="1">Hemagglutinating activity is stable up to 50 degrees Celsius and is lost after incubation for 1 hour at 80 degrees Celsius.</text>
    </temperatureDependence>
</comment>
<comment type="subunit">
    <text evidence="2">Homotetramer; dimer of dimers.</text>
</comment>
<comment type="PTM">
    <text evidence="3 5">Concanavalin A-like lectins of the Diocleinae subtribe undergo proteolytic processing referred to as circular permutation. The propeptide is split into an N-terminal and a C-terminal part, the gamma and beta chain, respectively. These are then religated in beta-gamma order to form the mature alpha chain. The beta and gamma chains can often be detected in cell extracts. Residues 1-118 of the mature chain, as displayed here, probably constitute the beta chain in the propeptide, residues 119-237 the gamma chain.</text>
</comment>
<comment type="mass spectrometry"/>
<comment type="miscellaneous">
    <text evidence="6">Binds one manganese (or another transition metal) ion and one calcium ion. The metal ions are essential for the saccharide-binding and cell-agglutinating activities.</text>
</comment>
<comment type="similarity">
    <text evidence="5">Belongs to the leguminous lectin family.</text>
</comment>
<sequence>ADTIVAVELDSYPNTDIGDPNYPHIGIDIKSVRSKSTARWNMQTGKVGTVHISYNSVSKRLSAVVSYSGSSSTTVSYDVDLNNVLPEWVRVGLSATTGLYKQTNTILSWSFTSKLKTNSIADENSLHFSFHKFSQNPKDLILQGDASTDSDGNLQLTKVSSSGDPQGNSVGRALFYAPVHIWEKSAVVASFDATFTFLIKSPDREPADGITFFIANTDTTIPSGSGGRLLGLFPDAN</sequence>
<dbReference type="PDB" id="5TG3">
    <property type="method" value="X-ray"/>
    <property type="resolution" value="1.80 A"/>
    <property type="chains" value="A/B/C/D=1-237"/>
</dbReference>
<dbReference type="PDBsum" id="5TG3"/>
<dbReference type="SMR" id="C0HK81"/>
<dbReference type="UniLectin" id="C0HK81"/>
<dbReference type="GO" id="GO:0005509">
    <property type="term" value="F:calcium ion binding"/>
    <property type="evidence" value="ECO:0000314"/>
    <property type="project" value="UniProtKB"/>
</dbReference>
<dbReference type="GO" id="GO:0005537">
    <property type="term" value="F:D-mannose binding"/>
    <property type="evidence" value="ECO:0000314"/>
    <property type="project" value="UniProtKB"/>
</dbReference>
<dbReference type="GO" id="GO:0030145">
    <property type="term" value="F:manganese ion binding"/>
    <property type="evidence" value="ECO:0000314"/>
    <property type="project" value="UniProtKB"/>
</dbReference>
<dbReference type="FunFam" id="2.60.120.200:FF:000227">
    <property type="entry name" value="Concanavalin-A"/>
    <property type="match status" value="1"/>
</dbReference>
<dbReference type="Gene3D" id="2.60.120.200">
    <property type="match status" value="1"/>
</dbReference>
<dbReference type="InterPro" id="IPR013320">
    <property type="entry name" value="ConA-like_dom_sf"/>
</dbReference>
<dbReference type="InterPro" id="IPR000985">
    <property type="entry name" value="Lectin_LegA_CS"/>
</dbReference>
<dbReference type="InterPro" id="IPR019825">
    <property type="entry name" value="Lectin_legB_Mn/Ca_BS"/>
</dbReference>
<dbReference type="InterPro" id="IPR001220">
    <property type="entry name" value="Legume_lectin_dom"/>
</dbReference>
<dbReference type="InterPro" id="IPR050258">
    <property type="entry name" value="Leguminous_Lectin"/>
</dbReference>
<dbReference type="PANTHER" id="PTHR32401">
    <property type="entry name" value="CONCANAVALIN A-LIKE LECTIN FAMILY PROTEIN"/>
    <property type="match status" value="1"/>
</dbReference>
<dbReference type="PANTHER" id="PTHR32401:SF47">
    <property type="entry name" value="LEGUME LECTIN DOMAIN-CONTAINING PROTEIN"/>
    <property type="match status" value="1"/>
</dbReference>
<dbReference type="Pfam" id="PF00139">
    <property type="entry name" value="Lectin_legB"/>
    <property type="match status" value="2"/>
</dbReference>
<dbReference type="SUPFAM" id="SSF49899">
    <property type="entry name" value="Concanavalin A-like lectins/glucanases"/>
    <property type="match status" value="1"/>
</dbReference>
<dbReference type="PROSITE" id="PS00308">
    <property type="entry name" value="LECTIN_LEGUME_ALPHA"/>
    <property type="match status" value="1"/>
</dbReference>
<dbReference type="PROSITE" id="PS00307">
    <property type="entry name" value="LECTIN_LEGUME_BETA"/>
    <property type="match status" value="1"/>
</dbReference>
<accession>C0HK81</accession>
<evidence type="ECO:0000269" key="1">
    <source>
    </source>
</evidence>
<evidence type="ECO:0000269" key="2">
    <source>
    </source>
</evidence>
<evidence type="ECO:0000303" key="3">
    <source>
    </source>
</evidence>
<evidence type="ECO:0000303" key="4">
    <source>
    </source>
</evidence>
<evidence type="ECO:0000305" key="5"/>
<evidence type="ECO:0000305" key="6">
    <source>
    </source>
</evidence>
<evidence type="ECO:0007744" key="7">
    <source>
        <dbReference type="PDB" id="5TG3"/>
    </source>
</evidence>
<evidence type="ECO:0007829" key="8">
    <source>
        <dbReference type="PDB" id="5TG3"/>
    </source>
</evidence>
<keyword id="KW-0002">3D-structure</keyword>
<keyword id="KW-0106">Calcium</keyword>
<keyword id="KW-0903">Direct protein sequencing</keyword>
<keyword id="KW-0348">Hemagglutinin</keyword>
<keyword id="KW-0430">Lectin</keyword>
<keyword id="KW-0464">Manganese</keyword>
<keyword id="KW-0465">Mannose-binding</keyword>
<keyword id="KW-0479">Metal-binding</keyword>
<organism>
    <name type="scientific">Macropsychanthus comosus</name>
    <name type="common">Sea purse</name>
    <name type="synonym">Dioclea reflexa</name>
    <dbReference type="NCBI Taxonomy" id="2986840"/>
    <lineage>
        <taxon>Eukaryota</taxon>
        <taxon>Viridiplantae</taxon>
        <taxon>Streptophyta</taxon>
        <taxon>Embryophyta</taxon>
        <taxon>Tracheophyta</taxon>
        <taxon>Spermatophyta</taxon>
        <taxon>Magnoliopsida</taxon>
        <taxon>eudicotyledons</taxon>
        <taxon>Gunneridae</taxon>
        <taxon>Pentapetalae</taxon>
        <taxon>rosids</taxon>
        <taxon>fabids</taxon>
        <taxon>Fabales</taxon>
        <taxon>Fabaceae</taxon>
        <taxon>Papilionoideae</taxon>
        <taxon>50 kb inversion clade</taxon>
        <taxon>NPAAA clade</taxon>
        <taxon>indigoferoid/millettioid clade</taxon>
        <taxon>Phaseoleae</taxon>
        <taxon>Macropsychanthus</taxon>
    </lineage>
</organism>
<protein>
    <recommendedName>
        <fullName evidence="3">Lectin</fullName>
        <shortName evidence="3">DrfL</shortName>
    </recommendedName>
</protein>